<dbReference type="EC" id="3.4.23.-"/>
<dbReference type="Proteomes" id="UP000002356">
    <property type="component" value="Unplaced"/>
</dbReference>
<dbReference type="GO" id="GO:0005576">
    <property type="term" value="C:extracellular region"/>
    <property type="evidence" value="ECO:0007669"/>
    <property type="project" value="UniProtKB-SubCell"/>
</dbReference>
<dbReference type="GO" id="GO:0004190">
    <property type="term" value="F:aspartic-type endopeptidase activity"/>
    <property type="evidence" value="ECO:0007669"/>
    <property type="project" value="UniProtKB-KW"/>
</dbReference>
<dbReference type="GO" id="GO:0006508">
    <property type="term" value="P:proteolysis"/>
    <property type="evidence" value="ECO:0007669"/>
    <property type="project" value="UniProtKB-KW"/>
</dbReference>
<proteinExistence type="evidence at protein level"/>
<organism>
    <name type="scientific">Ovis aries</name>
    <name type="common">Sheep</name>
    <dbReference type="NCBI Taxonomy" id="9940"/>
    <lineage>
        <taxon>Eukaryota</taxon>
        <taxon>Metazoa</taxon>
        <taxon>Chordata</taxon>
        <taxon>Craniata</taxon>
        <taxon>Vertebrata</taxon>
        <taxon>Euteleostomi</taxon>
        <taxon>Mammalia</taxon>
        <taxon>Eutheria</taxon>
        <taxon>Laurasiatheria</taxon>
        <taxon>Artiodactyla</taxon>
        <taxon>Ruminantia</taxon>
        <taxon>Pecora</taxon>
        <taxon>Bovidae</taxon>
        <taxon>Caprinae</taxon>
        <taxon>Ovis</taxon>
    </lineage>
</organism>
<feature type="chain" id="PRO_0000199526" description="Pregnancy-associated glycoprotein 61b">
    <location>
        <begin position="1"/>
        <end position="18" status="greater than"/>
    </location>
</feature>
<feature type="glycosylation site" description="N-linked (GlcNAc...) asparagine" evidence="2">
    <location>
        <position position="4"/>
    </location>
</feature>
<feature type="non-terminal residue" evidence="4">
    <location>
        <position position="18"/>
    </location>
</feature>
<evidence type="ECO:0000250" key="1">
    <source>
        <dbReference type="UniProtKB" id="Q28755"/>
    </source>
</evidence>
<evidence type="ECO:0000255" key="2"/>
<evidence type="ECO:0000269" key="3">
    <source>
    </source>
</evidence>
<evidence type="ECO:0000303" key="4">
    <source>
    </source>
</evidence>
<evidence type="ECO:0000305" key="5"/>
<sequence length="18" mass="2099">RGSNLTIHPLRNTNDIDY</sequence>
<protein>
    <recommendedName>
        <fullName>Pregnancy-associated glycoprotein 61b</fullName>
        <ecNumber>3.4.23.-</ecNumber>
    </recommendedName>
    <alternativeName>
        <fullName>ovPAG 61b</fullName>
    </alternativeName>
</protein>
<keyword id="KW-0064">Aspartyl protease</keyword>
<keyword id="KW-0903">Direct protein sequencing</keyword>
<keyword id="KW-0325">Glycoprotein</keyword>
<keyword id="KW-0378">Hydrolase</keyword>
<keyword id="KW-0645">Protease</keyword>
<keyword id="KW-1185">Reference proteome</keyword>
<keyword id="KW-0964">Secreted</keyword>
<accession>P83494</accession>
<name>PA61B_SHEEP</name>
<comment type="subcellular location">
    <subcellularLocation>
        <location evidence="1">Secreted</location>
        <location evidence="1">Extracellular space</location>
    </subcellularLocation>
</comment>
<comment type="tissue specificity">
    <text evidence="3">Highly expressed in the placenta between day 60 and day 100 of gestation.</text>
</comment>
<comment type="miscellaneous">
    <text evidence="3">On the 2D-gel the determined pI of this protein is: 4.0, its MW determined on 1D-gel is: 61 kDa.</text>
</comment>
<comment type="similarity">
    <text evidence="2">Belongs to the peptidase A1 family.</text>
</comment>
<reference evidence="5" key="1">
    <citation type="journal article" date="2004" name="Reprod. Nutr. Dev.">
        <title>Isolation and characterization of eight pregnancy-associated glycoproteins present at high levels in the ovine placenta between day 60 and day 100 of gestation.</title>
        <authorList>
            <person name="El Amiri B."/>
            <person name="Remy B."/>
            <person name="De Sousa N.M."/>
            <person name="Beckers J.F."/>
        </authorList>
    </citation>
    <scope>PROTEIN SEQUENCE</scope>
    <source>
        <tissue evidence="3">Fetal cotyledon</tissue>
    </source>
</reference>